<protein>
    <recommendedName>
        <fullName>Pre-mRNA-splicing factor SYF1</fullName>
    </recommendedName>
</protein>
<reference key="1">
    <citation type="journal article" date="2005" name="Science">
        <title>The genome of the basidiomycetous yeast and human pathogen Cryptococcus neoformans.</title>
        <authorList>
            <person name="Loftus B.J."/>
            <person name="Fung E."/>
            <person name="Roncaglia P."/>
            <person name="Rowley D."/>
            <person name="Amedeo P."/>
            <person name="Bruno D."/>
            <person name="Vamathevan J."/>
            <person name="Miranda M."/>
            <person name="Anderson I.J."/>
            <person name="Fraser J.A."/>
            <person name="Allen J.E."/>
            <person name="Bosdet I.E."/>
            <person name="Brent M.R."/>
            <person name="Chiu R."/>
            <person name="Doering T.L."/>
            <person name="Donlin M.J."/>
            <person name="D'Souza C.A."/>
            <person name="Fox D.S."/>
            <person name="Grinberg V."/>
            <person name="Fu J."/>
            <person name="Fukushima M."/>
            <person name="Haas B.J."/>
            <person name="Huang J.C."/>
            <person name="Janbon G."/>
            <person name="Jones S.J.M."/>
            <person name="Koo H.L."/>
            <person name="Krzywinski M.I."/>
            <person name="Kwon-Chung K.J."/>
            <person name="Lengeler K.B."/>
            <person name="Maiti R."/>
            <person name="Marra M.A."/>
            <person name="Marra R.E."/>
            <person name="Mathewson C.A."/>
            <person name="Mitchell T.G."/>
            <person name="Pertea M."/>
            <person name="Riggs F.R."/>
            <person name="Salzberg S.L."/>
            <person name="Schein J.E."/>
            <person name="Shvartsbeyn A."/>
            <person name="Shin H."/>
            <person name="Shumway M."/>
            <person name="Specht C.A."/>
            <person name="Suh B.B."/>
            <person name="Tenney A."/>
            <person name="Utterback T.R."/>
            <person name="Wickes B.L."/>
            <person name="Wortman J.R."/>
            <person name="Wye N.H."/>
            <person name="Kronstad J.W."/>
            <person name="Lodge J.K."/>
            <person name="Heitman J."/>
            <person name="Davis R.W."/>
            <person name="Fraser C.M."/>
            <person name="Hyman R.W."/>
        </authorList>
    </citation>
    <scope>NUCLEOTIDE SEQUENCE [LARGE SCALE GENOMIC DNA]</scope>
    <source>
        <strain>JEC21 / ATCC MYA-565</strain>
    </source>
</reference>
<dbReference type="EMBL" id="AE017345">
    <property type="protein sequence ID" value="AAW43409.1"/>
    <property type="molecule type" value="Genomic_DNA"/>
</dbReference>
<dbReference type="RefSeq" id="XP_570716.1">
    <property type="nucleotide sequence ID" value="XM_570716.1"/>
</dbReference>
<dbReference type="SMR" id="P0CO08"/>
<dbReference type="FunCoup" id="P0CO08">
    <property type="interactions" value="734"/>
</dbReference>
<dbReference type="STRING" id="214684.P0CO08"/>
<dbReference type="PaxDb" id="214684-P0CO08"/>
<dbReference type="EnsemblFungi" id="AAW43409">
    <property type="protein sequence ID" value="AAW43409"/>
    <property type="gene ID" value="CNE01310"/>
</dbReference>
<dbReference type="GeneID" id="3257860"/>
<dbReference type="KEGG" id="cne:CNE01310"/>
<dbReference type="VEuPathDB" id="FungiDB:CNE01310"/>
<dbReference type="eggNOG" id="KOG2047">
    <property type="taxonomic scope" value="Eukaryota"/>
</dbReference>
<dbReference type="HOGENOM" id="CLU_007736_1_0_1"/>
<dbReference type="InParanoid" id="P0CO08"/>
<dbReference type="OMA" id="AWHARAK"/>
<dbReference type="OrthoDB" id="10067343at2759"/>
<dbReference type="Proteomes" id="UP000002149">
    <property type="component" value="Chromosome 5"/>
</dbReference>
<dbReference type="GO" id="GO:0071014">
    <property type="term" value="C:post-mRNA release spliceosomal complex"/>
    <property type="evidence" value="ECO:0000318"/>
    <property type="project" value="GO_Central"/>
</dbReference>
<dbReference type="GO" id="GO:0000974">
    <property type="term" value="C:Prp19 complex"/>
    <property type="evidence" value="ECO:0000318"/>
    <property type="project" value="GO_Central"/>
</dbReference>
<dbReference type="GO" id="GO:0071007">
    <property type="term" value="C:U2-type catalytic step 2 spliceosome"/>
    <property type="evidence" value="ECO:0000318"/>
    <property type="project" value="GO_Central"/>
</dbReference>
<dbReference type="GO" id="GO:0000349">
    <property type="term" value="P:generation of catalytic spliceosome for first transesterification step"/>
    <property type="evidence" value="ECO:0000318"/>
    <property type="project" value="GO_Central"/>
</dbReference>
<dbReference type="GO" id="GO:0000398">
    <property type="term" value="P:mRNA splicing, via spliceosome"/>
    <property type="evidence" value="ECO:0000318"/>
    <property type="project" value="GO_Central"/>
</dbReference>
<dbReference type="FunFam" id="1.25.40.10:FF:000023">
    <property type="entry name" value="Pre-mRNA-splicing factor SYF1"/>
    <property type="match status" value="1"/>
</dbReference>
<dbReference type="FunFam" id="1.25.40.10:FF:000137">
    <property type="entry name" value="Pre-mRNA-splicing factor syf1"/>
    <property type="match status" value="1"/>
</dbReference>
<dbReference type="FunFam" id="1.25.40.10:FF:000038">
    <property type="entry name" value="Putative pre-mRNA-splicing factor SYF1"/>
    <property type="match status" value="1"/>
</dbReference>
<dbReference type="Gene3D" id="1.25.40.10">
    <property type="entry name" value="Tetratricopeptide repeat domain"/>
    <property type="match status" value="4"/>
</dbReference>
<dbReference type="InterPro" id="IPR003107">
    <property type="entry name" value="HAT"/>
</dbReference>
<dbReference type="InterPro" id="IPR055433">
    <property type="entry name" value="HAT_Syf1-like_N"/>
</dbReference>
<dbReference type="InterPro" id="IPR056350">
    <property type="entry name" value="HAT_Syf1_central"/>
</dbReference>
<dbReference type="InterPro" id="IPR055430">
    <property type="entry name" value="HAT_Syf1_CNRKL1_C"/>
</dbReference>
<dbReference type="InterPro" id="IPR045075">
    <property type="entry name" value="Syf1-like"/>
</dbReference>
<dbReference type="InterPro" id="IPR011990">
    <property type="entry name" value="TPR-like_helical_dom_sf"/>
</dbReference>
<dbReference type="InterPro" id="IPR019734">
    <property type="entry name" value="TPR_rpt"/>
</dbReference>
<dbReference type="PANTHER" id="PTHR11246">
    <property type="entry name" value="PRE-MRNA SPLICING FACTOR"/>
    <property type="match status" value="1"/>
</dbReference>
<dbReference type="PANTHER" id="PTHR11246:SF5">
    <property type="entry name" value="PRE-MRNA-SPLICING FACTOR SYF1"/>
    <property type="match status" value="1"/>
</dbReference>
<dbReference type="Pfam" id="PF23231">
    <property type="entry name" value="HAT_Syf1_CNRKL1_C"/>
    <property type="match status" value="1"/>
</dbReference>
<dbReference type="Pfam" id="PF23233">
    <property type="entry name" value="HAT_Syf1_CNRKL1_N"/>
    <property type="match status" value="1"/>
</dbReference>
<dbReference type="Pfam" id="PF23220">
    <property type="entry name" value="HAT_Syf1_M"/>
    <property type="match status" value="1"/>
</dbReference>
<dbReference type="SMART" id="SM00386">
    <property type="entry name" value="HAT"/>
    <property type="match status" value="10"/>
</dbReference>
<dbReference type="SMART" id="SM00028">
    <property type="entry name" value="TPR"/>
    <property type="match status" value="4"/>
</dbReference>
<dbReference type="SUPFAM" id="SSF48452">
    <property type="entry name" value="TPR-like"/>
    <property type="match status" value="3"/>
</dbReference>
<accession>P0CO08</accession>
<accession>Q55SQ9</accession>
<accession>Q5KH46</accession>
<comment type="function">
    <text evidence="1">Involved in pre-mRNA splicing and cell cycle progression.</text>
</comment>
<comment type="subunit">
    <text evidence="1">Associated with the spliceosome.</text>
</comment>
<comment type="subcellular location">
    <subcellularLocation>
        <location evidence="1">Nucleus</location>
    </subcellularLocation>
</comment>
<comment type="similarity">
    <text evidence="3">Belongs to the crooked-neck family.</text>
</comment>
<evidence type="ECO:0000250" key="1"/>
<evidence type="ECO:0000256" key="2">
    <source>
        <dbReference type="SAM" id="MobiDB-lite"/>
    </source>
</evidence>
<evidence type="ECO:0000305" key="3"/>
<proteinExistence type="inferred from homology"/>
<keyword id="KW-0507">mRNA processing</keyword>
<keyword id="KW-0508">mRNA splicing</keyword>
<keyword id="KW-0539">Nucleus</keyword>
<keyword id="KW-1185">Reference proteome</keyword>
<keyword id="KW-0677">Repeat</keyword>
<keyword id="KW-0747">Spliceosome</keyword>
<feature type="chain" id="PRO_0000205728" description="Pre-mRNA-splicing factor SYF1">
    <location>
        <begin position="1"/>
        <end position="1031"/>
    </location>
</feature>
<feature type="repeat" description="HAT 1">
    <location>
        <begin position="28"/>
        <end position="60"/>
    </location>
</feature>
<feature type="repeat" description="HAT 2">
    <location>
        <begin position="90"/>
        <end position="122"/>
    </location>
</feature>
<feature type="repeat" description="HAT 3">
    <location>
        <begin position="214"/>
        <end position="248"/>
    </location>
</feature>
<feature type="repeat" description="HAT 4">
    <location>
        <begin position="250"/>
        <end position="269"/>
    </location>
</feature>
<feature type="repeat" description="HAT 5">
    <location>
        <begin position="452"/>
        <end position="487"/>
    </location>
</feature>
<feature type="repeat" description="HAT 6">
    <location>
        <begin position="610"/>
        <end position="646"/>
    </location>
</feature>
<feature type="repeat" description="HAT 7">
    <location>
        <begin position="664"/>
        <end position="698"/>
    </location>
</feature>
<feature type="repeat" description="HAT 8">
    <location>
        <begin position="700"/>
        <end position="732"/>
    </location>
</feature>
<feature type="repeat" description="HAT 9">
    <location>
        <begin position="734"/>
        <end position="768"/>
    </location>
</feature>
<feature type="repeat" description="HAT 10">
    <location>
        <begin position="773"/>
        <end position="807"/>
    </location>
</feature>
<feature type="repeat" description="HAT 11">
    <location>
        <begin position="845"/>
        <end position="879"/>
    </location>
</feature>
<feature type="repeat" description="HAT 12">
    <location>
        <begin position="881"/>
        <end position="915"/>
    </location>
</feature>
<feature type="region of interest" description="Disordered" evidence="2">
    <location>
        <begin position="346"/>
        <end position="368"/>
    </location>
</feature>
<feature type="region of interest" description="Disordered" evidence="2">
    <location>
        <begin position="948"/>
        <end position="969"/>
    </location>
</feature>
<feature type="region of interest" description="Disordered" evidence="2">
    <location>
        <begin position="1003"/>
        <end position="1031"/>
    </location>
</feature>
<feature type="compositionally biased region" description="Low complexity" evidence="2">
    <location>
        <begin position="353"/>
        <end position="368"/>
    </location>
</feature>
<gene>
    <name type="primary">SYF1</name>
    <name type="ordered locus">CNE01310</name>
</gene>
<sequence>MASTSLVDSLTSHFPLTLPIPTPITHPHLIPSADLPVEEDLLHNPENLRSWLSYIHNVKEKIAADEPAKGGVLSPEEEILGPLASKNARDGLQRLVSIYERAIAVFPTSYKLWKAYYLTRQSYVLGELTNDAKEARSQQAKRGAAYKTNVRELLDGAEEAHEWTGGLDPVVGYAEWRSLVATGERMIMCLPNLPIPWLLHLGVLLHPKCPSVFKNGSYARRAFDRALRTLPPSLHGRVWGLYLRWAEIVGGDAGERVWRRYLKVDPSLTERHITYLLEAEEPRPLAAAKYLLSIARRAQQNLYSSLEGKSPYQLFVDFLELVEKYADQIGMDEEGTLELQRTKRAVEEKVDGEQPQVEGQEQQPQEEPASINGRLMRIAGPPVPLEQGKLFKPVNAASAQAPTQLTYDEDTDPSNPRLLDVEGIVERDGLQVYKDQAGRLWTGLATYWIKRGEFERATATFERGLAAVVTIRDFTQIFDAYAEFSETMISTLMDALADEDNLEDEDFDAEETEQELDERMKSFEELMDRRPFLVNDVLLRRNPNEVVEWEKRIALHGDDDAKVVEAYVKALDTINPRKATGPLYPLYVNFAKFYEEGGSKDDNGEPRNEPDLEQARKIFERATKVPFKAVDELAEVWCEWAEMELRNENYEEAIRLMQRATTVPKNTKINYYDDNIPPQSRLFKSLKLWSYYSDLEESIGTVESTKAVYDKIMELKIANAQVIVNYATFLEENKYFEESFKVYERGIELFHFPIAFEIWNIYLSKFVKRYGGKKLERARDLFEQALENCPEKFCKPLYLMYAKLEEEHGLAKRAMGIYDRAASTVQDSDKFEMYTIYIAKATANFGLPATRPIYERALESLPDKQTAEMCRRFARMERKLGEIDRARAIYAHASQFCDPRIEPEFWQEWNDFEIETGSEDTFREMLRIKRAVQASFNTETSFIAAQAAAASKGTEKPTDTSAQEAQDAADPMAAMERELSAAGADGARKGGAPAFVASTLNKTNANGIDEGGEETGEMANPDAIVMDEDEF</sequence>
<name>SYF1_CRYNJ</name>
<organism>
    <name type="scientific">Cryptococcus neoformans var. neoformans serotype D (strain JEC21 / ATCC MYA-565)</name>
    <name type="common">Filobasidiella neoformans</name>
    <dbReference type="NCBI Taxonomy" id="214684"/>
    <lineage>
        <taxon>Eukaryota</taxon>
        <taxon>Fungi</taxon>
        <taxon>Dikarya</taxon>
        <taxon>Basidiomycota</taxon>
        <taxon>Agaricomycotina</taxon>
        <taxon>Tremellomycetes</taxon>
        <taxon>Tremellales</taxon>
        <taxon>Cryptococcaceae</taxon>
        <taxon>Cryptococcus</taxon>
        <taxon>Cryptococcus neoformans species complex</taxon>
    </lineage>
</organism>